<name>HMCES_CHICK</name>
<sequence>MCGRTACSLGAARLRRACAYRDRQGRRQQPEWLREGRYRPSYNKGPQSSGPVLLSRKHVQQDADSSERVLMDMRWGLVPSWFKEDDPSKMQFKTSNCRSDTMLSKSSYKGPLLKGKRCVVLADGFYEWQQRGGGKQPYFIYFPQNKKHPAEEEEDSDEEWRGWRLLTMAGIFDCWEPPKGGEPLYTYTIITVDASEDVSFIHHRMPAILDGDEAIEKWLDFAEVPTREAMKLIRPAENIAFHPVSTFVNSVRNDTPECLVPIELGVPKEVKATASSKAMLGWLKSSQEGSPQKKEDTLPRWKSQFIHSPSPKKSSAGILRQWLGQEGGPPAKKQKA</sequence>
<reference key="1">
    <citation type="journal article" date="2005" name="Genome Biol.">
        <title>Full-length cDNAs from chicken bursal lymphocytes to facilitate gene function analysis.</title>
        <authorList>
            <person name="Caldwell R.B."/>
            <person name="Kierzek A.M."/>
            <person name="Arakawa H."/>
            <person name="Bezzubov Y."/>
            <person name="Zaim J."/>
            <person name="Fiedler P."/>
            <person name="Kutter S."/>
            <person name="Blagodatski A."/>
            <person name="Kostovska D."/>
            <person name="Koter M."/>
            <person name="Plachy J."/>
            <person name="Carninci P."/>
            <person name="Hayashizaki Y."/>
            <person name="Buerstedde J.-M."/>
        </authorList>
    </citation>
    <scope>NUCLEOTIDE SEQUENCE [LARGE SCALE MRNA]</scope>
    <source>
        <strain>CB</strain>
        <tissue>Bursa of Fabricius</tissue>
    </source>
</reference>
<proteinExistence type="evidence at transcript level"/>
<accession>Q5ZJT1</accession>
<comment type="function">
    <text evidence="2 3 4">Sensor of abasic sites in single-stranded DNA (ssDNA) required to preserve genome integrity by promoting error-free repair of abasic sites. Acts as an enzyme that recognizes and binds abasic sites in ssDNA at replication forks and chemically modifies the lesion by forming a covalent cross-link with DNA: forms a stable thiazolidine linkage between a ring-opened abasic site and the alpha-amino and sulfhydryl substituents of its N-terminal catalytic cysteine residue (By similarity). The HMCES DNA-protein cross-link is then either reversed or degraded. HMCES is able to catalyze the reversal of its thiazolidine cross-link and cycle between a cross-link and a non-cross-linked state depending on DNA context: mediates self-reversal of the thiazolidine cross-link in double stranded DNA, allowing APEX1 to initiate downstream repair of abasic sites. The HMCES DNA-protein cross-link can also be degraded by the SPRTN metalloprotease following unfolding by the BRIP1/FANCJ helicase (By similarity). Promotes error-free repair of abasic sites by protecting abasic sites from translesion synthesis (TLS) polymerases and endonucleases that are error-prone and would generate mutations and double-strand breaks (By similarity). Acts as a protease: mediates autocatalytic processing of its N-terminal methionine in order to expose the catalytic cysteine (By similarity). The HMCES DNA-protein cross-link is then either reversed or degraded. According to a model, the HMCES DNA-protein cross-link (By similarity).</text>
</comment>
<comment type="activity regulation">
    <text evidence="4">Formation and reversal of DNA-protein cross-link depends on DNA context. Catalyzes formation of the thiazolidine linkage in presence of abasic sites in single-stranded DNA. Mediates the reversal of the thiazolidine cross-link in presence of double stranded DNA.</text>
</comment>
<comment type="subcellular location">
    <subcellularLocation>
        <location evidence="4">Chromosome</location>
    </subcellularLocation>
    <text evidence="4">Recruited to chromatin following DNA damage. Localizes to replication forks.</text>
</comment>
<comment type="domain">
    <text evidence="1 4">The N-terminal catalytic Cys-2 residue forms a thiazolidine linkage to a ring-opened DNA abasic site. Glu-127 catalyzes reversal of the thiazolidine linkage; self-reversal is favoured by duplex DNA formation (By similarity). Glu-127 is also involved in sensing abasic sites in single-stranded DNA (ssDNA). His-202 stabilizes the abasic sites by forming a hydrogen bond with the O4' hydroxyl group (By similarity).</text>
</comment>
<comment type="similarity">
    <text evidence="7">Belongs to the SOS response-associated peptidase family.</text>
</comment>
<gene>
    <name evidence="4" type="primary">HMCES</name>
    <name evidence="4" type="synonym">SRAPD1</name>
    <name evidence="6" type="ORF">RCJMB04_15p13</name>
</gene>
<dbReference type="EC" id="4.-.-.-" evidence="4"/>
<dbReference type="EC" id="3.4.-.-" evidence="3"/>
<dbReference type="EMBL" id="AJ720353">
    <property type="protein sequence ID" value="CAG32012.1"/>
    <property type="molecule type" value="mRNA"/>
</dbReference>
<dbReference type="RefSeq" id="NP_001006137.1">
    <property type="nucleotide sequence ID" value="NM_001006137.2"/>
</dbReference>
<dbReference type="SMR" id="Q5ZJT1"/>
<dbReference type="FunCoup" id="Q5ZJT1">
    <property type="interactions" value="421"/>
</dbReference>
<dbReference type="STRING" id="9031.ENSGALP00000009476"/>
<dbReference type="PaxDb" id="9031-ENSGALP00000009476"/>
<dbReference type="Ensembl" id="ENSGALT00010066144.1">
    <property type="protein sequence ID" value="ENSGALP00010040410.1"/>
    <property type="gene ID" value="ENSGALG00010027280.1"/>
</dbReference>
<dbReference type="GeneID" id="416015"/>
<dbReference type="KEGG" id="gga:416015"/>
<dbReference type="CTD" id="56941"/>
<dbReference type="VEuPathDB" id="HostDB:geneid_416015"/>
<dbReference type="eggNOG" id="KOG2618">
    <property type="taxonomic scope" value="Eukaryota"/>
</dbReference>
<dbReference type="GeneTree" id="ENSGT00390000018439"/>
<dbReference type="InParanoid" id="Q5ZJT1"/>
<dbReference type="OMA" id="SYNKGPQ"/>
<dbReference type="OrthoDB" id="2111841at2759"/>
<dbReference type="PhylomeDB" id="Q5ZJT1"/>
<dbReference type="PRO" id="PR:Q5ZJT1"/>
<dbReference type="Proteomes" id="UP000000539">
    <property type="component" value="Chromosome 12"/>
</dbReference>
<dbReference type="GO" id="GO:0005657">
    <property type="term" value="C:replication fork"/>
    <property type="evidence" value="ECO:0000250"/>
    <property type="project" value="UniProtKB"/>
</dbReference>
<dbReference type="GO" id="GO:0140431">
    <property type="term" value="F:DNA-(abasic site) binding"/>
    <property type="evidence" value="ECO:0007669"/>
    <property type="project" value="Ensembl"/>
</dbReference>
<dbReference type="GO" id="GO:0008233">
    <property type="term" value="F:peptidase activity"/>
    <property type="evidence" value="ECO:0007669"/>
    <property type="project" value="UniProtKB-KW"/>
</dbReference>
<dbReference type="GO" id="GO:0160129">
    <property type="term" value="F:protein-DNA covalent cross-linking activity"/>
    <property type="evidence" value="ECO:0000250"/>
    <property type="project" value="UniProtKB"/>
</dbReference>
<dbReference type="GO" id="GO:0003697">
    <property type="term" value="F:single-stranded DNA binding"/>
    <property type="evidence" value="ECO:0000250"/>
    <property type="project" value="UniProtKB"/>
</dbReference>
<dbReference type="GO" id="GO:0006974">
    <property type="term" value="P:DNA damage response"/>
    <property type="evidence" value="ECO:0000250"/>
    <property type="project" value="UniProtKB"/>
</dbReference>
<dbReference type="GO" id="GO:0097681">
    <property type="term" value="P:double-strand break repair via alternative nonhomologous end joining"/>
    <property type="evidence" value="ECO:0007669"/>
    <property type="project" value="Ensembl"/>
</dbReference>
<dbReference type="GO" id="GO:0036297">
    <property type="term" value="P:interstrand cross-link repair"/>
    <property type="evidence" value="ECO:0000250"/>
    <property type="project" value="UniProtKB"/>
</dbReference>
<dbReference type="GO" id="GO:0045830">
    <property type="term" value="P:positive regulation of isotype switching"/>
    <property type="evidence" value="ECO:0000250"/>
    <property type="project" value="UniProtKB"/>
</dbReference>
<dbReference type="GO" id="GO:0106300">
    <property type="term" value="P:protein-DNA covalent cross-linking repair"/>
    <property type="evidence" value="ECO:0000250"/>
    <property type="project" value="UniProtKB"/>
</dbReference>
<dbReference type="GO" id="GO:0006508">
    <property type="term" value="P:proteolysis"/>
    <property type="evidence" value="ECO:0007669"/>
    <property type="project" value="UniProtKB-KW"/>
</dbReference>
<dbReference type="GO" id="GO:0016446">
    <property type="term" value="P:somatic hypermutation of immunoglobulin genes"/>
    <property type="evidence" value="ECO:0007669"/>
    <property type="project" value="Ensembl"/>
</dbReference>
<dbReference type="Gene3D" id="3.90.1680.10">
    <property type="entry name" value="SOS response associated peptidase-like"/>
    <property type="match status" value="1"/>
</dbReference>
<dbReference type="InterPro" id="IPR003738">
    <property type="entry name" value="SRAP"/>
</dbReference>
<dbReference type="InterPro" id="IPR036590">
    <property type="entry name" value="SRAP-like"/>
</dbReference>
<dbReference type="PANTHER" id="PTHR13604:SF0">
    <property type="entry name" value="ABASIC SITE PROCESSING PROTEIN HMCES"/>
    <property type="match status" value="1"/>
</dbReference>
<dbReference type="PANTHER" id="PTHR13604">
    <property type="entry name" value="DC12-RELATED"/>
    <property type="match status" value="1"/>
</dbReference>
<dbReference type="Pfam" id="PF02586">
    <property type="entry name" value="SRAP"/>
    <property type="match status" value="1"/>
</dbReference>
<dbReference type="SUPFAM" id="SSF143081">
    <property type="entry name" value="BB1717-like"/>
    <property type="match status" value="1"/>
</dbReference>
<keyword id="KW-0068">Autocatalytic cleavage</keyword>
<keyword id="KW-0158">Chromosome</keyword>
<keyword id="KW-0190">Covalent protein-DNA linkage</keyword>
<keyword id="KW-0227">DNA damage</keyword>
<keyword id="KW-0238">DNA-binding</keyword>
<keyword id="KW-0378">Hydrolase</keyword>
<keyword id="KW-0456">Lyase</keyword>
<keyword id="KW-0645">Protease</keyword>
<keyword id="KW-1185">Reference proteome</keyword>
<feature type="initiator methionine" description="Removed" evidence="3">
    <location>
        <position position="1"/>
    </location>
</feature>
<feature type="chain" id="PRO_0000164398" description="Abasic site processing protein HMCES">
    <location>
        <begin position="2"/>
        <end position="336"/>
    </location>
</feature>
<feature type="region of interest" description="Disordered" evidence="5">
    <location>
        <begin position="29"/>
        <end position="52"/>
    </location>
</feature>
<feature type="region of interest" description="Disordered" evidence="5">
    <location>
        <begin position="283"/>
        <end position="336"/>
    </location>
</feature>
<feature type="compositionally biased region" description="Basic and acidic residues" evidence="5">
    <location>
        <begin position="29"/>
        <end position="38"/>
    </location>
</feature>
<feature type="active site" description="Nucleophile" evidence="4">
    <location>
        <position position="2"/>
    </location>
</feature>
<feature type="active site" evidence="4">
    <location>
        <position position="127"/>
    </location>
</feature>
<feature type="site" description="Required for sensing abasic sites" evidence="1">
    <location>
        <position position="127"/>
    </location>
</feature>
<feature type="site" description="Required to stabilize abasic sites" evidence="1">
    <location>
        <position position="202"/>
    </location>
</feature>
<feature type="modified residue" description="Thiazolidine linkage to a ring-opened DNA abasic site" evidence="4">
    <location>
        <position position="2"/>
    </location>
</feature>
<protein>
    <recommendedName>
        <fullName evidence="7">Abasic site processing protein HMCES</fullName>
        <ecNumber evidence="4">4.-.-.-</ecNumber>
    </recommendedName>
    <alternativeName>
        <fullName>Embryonic stem cell-specific 5-hydroxymethylcytosine-binding protein</fullName>
        <shortName evidence="4">ES cell-specific 5hmC-binding protein</shortName>
    </alternativeName>
    <alternativeName>
        <fullName evidence="3">Peptidase HMCES</fullName>
        <ecNumber evidence="3">3.4.-.-</ecNumber>
    </alternativeName>
    <alternativeName>
        <fullName evidence="4">SRAP domain-containing protein 1</fullName>
    </alternativeName>
</protein>
<evidence type="ECO:0000250" key="1">
    <source>
        <dbReference type="UniProtKB" id="P76318"/>
    </source>
</evidence>
<evidence type="ECO:0000250" key="2">
    <source>
        <dbReference type="UniProtKB" id="Q6IND6"/>
    </source>
</evidence>
<evidence type="ECO:0000250" key="3">
    <source>
        <dbReference type="UniProtKB" id="Q8R1M0"/>
    </source>
</evidence>
<evidence type="ECO:0000250" key="4">
    <source>
        <dbReference type="UniProtKB" id="Q96FZ2"/>
    </source>
</evidence>
<evidence type="ECO:0000256" key="5">
    <source>
        <dbReference type="SAM" id="MobiDB-lite"/>
    </source>
</evidence>
<evidence type="ECO:0000303" key="6">
    <source>
    </source>
</evidence>
<evidence type="ECO:0000305" key="7"/>
<organism>
    <name type="scientific">Gallus gallus</name>
    <name type="common">Chicken</name>
    <dbReference type="NCBI Taxonomy" id="9031"/>
    <lineage>
        <taxon>Eukaryota</taxon>
        <taxon>Metazoa</taxon>
        <taxon>Chordata</taxon>
        <taxon>Craniata</taxon>
        <taxon>Vertebrata</taxon>
        <taxon>Euteleostomi</taxon>
        <taxon>Archelosauria</taxon>
        <taxon>Archosauria</taxon>
        <taxon>Dinosauria</taxon>
        <taxon>Saurischia</taxon>
        <taxon>Theropoda</taxon>
        <taxon>Coelurosauria</taxon>
        <taxon>Aves</taxon>
        <taxon>Neognathae</taxon>
        <taxon>Galloanserae</taxon>
        <taxon>Galliformes</taxon>
        <taxon>Phasianidae</taxon>
        <taxon>Phasianinae</taxon>
        <taxon>Gallus</taxon>
    </lineage>
</organism>